<gene>
    <name type="primary">RHBDF2</name>
    <name type="synonym">IRHOM2</name>
    <name type="synonym">RHBDL5</name>
    <name type="synonym">RHBDL6</name>
</gene>
<reference key="1">
    <citation type="submission" date="2003-12" db="EMBL/GenBank/DDBJ databases">
        <title>Molecular cloning of human RHBDL5.</title>
        <authorList>
            <person name="Kong X."/>
            <person name="Teng X."/>
            <person name="Hu L."/>
        </authorList>
    </citation>
    <scope>NUCLEOTIDE SEQUENCE [MRNA] (ISOFORM 2)</scope>
    <scope>VARIANT LEU-208</scope>
    <source>
        <tissue>Liver</tissue>
    </source>
</reference>
<reference key="2">
    <citation type="journal article" date="2004" name="Nat. Genet.">
        <title>Complete sequencing and characterization of 21,243 full-length human cDNAs.</title>
        <authorList>
            <person name="Ota T."/>
            <person name="Suzuki Y."/>
            <person name="Nishikawa T."/>
            <person name="Otsuki T."/>
            <person name="Sugiyama T."/>
            <person name="Irie R."/>
            <person name="Wakamatsu A."/>
            <person name="Hayashi K."/>
            <person name="Sato H."/>
            <person name="Nagai K."/>
            <person name="Kimura K."/>
            <person name="Makita H."/>
            <person name="Sekine M."/>
            <person name="Obayashi M."/>
            <person name="Nishi T."/>
            <person name="Shibahara T."/>
            <person name="Tanaka T."/>
            <person name="Ishii S."/>
            <person name="Yamamoto J."/>
            <person name="Saito K."/>
            <person name="Kawai Y."/>
            <person name="Isono Y."/>
            <person name="Nakamura Y."/>
            <person name="Nagahari K."/>
            <person name="Murakami K."/>
            <person name="Yasuda T."/>
            <person name="Iwayanagi T."/>
            <person name="Wagatsuma M."/>
            <person name="Shiratori A."/>
            <person name="Sudo H."/>
            <person name="Hosoiri T."/>
            <person name="Kaku Y."/>
            <person name="Kodaira H."/>
            <person name="Kondo H."/>
            <person name="Sugawara M."/>
            <person name="Takahashi M."/>
            <person name="Kanda K."/>
            <person name="Yokoi T."/>
            <person name="Furuya T."/>
            <person name="Kikkawa E."/>
            <person name="Omura Y."/>
            <person name="Abe K."/>
            <person name="Kamihara K."/>
            <person name="Katsuta N."/>
            <person name="Sato K."/>
            <person name="Tanikawa M."/>
            <person name="Yamazaki M."/>
            <person name="Ninomiya K."/>
            <person name="Ishibashi T."/>
            <person name="Yamashita H."/>
            <person name="Murakawa K."/>
            <person name="Fujimori K."/>
            <person name="Tanai H."/>
            <person name="Kimata M."/>
            <person name="Watanabe M."/>
            <person name="Hiraoka S."/>
            <person name="Chiba Y."/>
            <person name="Ishida S."/>
            <person name="Ono Y."/>
            <person name="Takiguchi S."/>
            <person name="Watanabe S."/>
            <person name="Yosida M."/>
            <person name="Hotuta T."/>
            <person name="Kusano J."/>
            <person name="Kanehori K."/>
            <person name="Takahashi-Fujii A."/>
            <person name="Hara H."/>
            <person name="Tanase T.-O."/>
            <person name="Nomura Y."/>
            <person name="Togiya S."/>
            <person name="Komai F."/>
            <person name="Hara R."/>
            <person name="Takeuchi K."/>
            <person name="Arita M."/>
            <person name="Imose N."/>
            <person name="Musashino K."/>
            <person name="Yuuki H."/>
            <person name="Oshima A."/>
            <person name="Sasaki N."/>
            <person name="Aotsuka S."/>
            <person name="Yoshikawa Y."/>
            <person name="Matsunawa H."/>
            <person name="Ichihara T."/>
            <person name="Shiohata N."/>
            <person name="Sano S."/>
            <person name="Moriya S."/>
            <person name="Momiyama H."/>
            <person name="Satoh N."/>
            <person name="Takami S."/>
            <person name="Terashima Y."/>
            <person name="Suzuki O."/>
            <person name="Nakagawa S."/>
            <person name="Senoh A."/>
            <person name="Mizoguchi H."/>
            <person name="Goto Y."/>
            <person name="Shimizu F."/>
            <person name="Wakebe H."/>
            <person name="Hishigaki H."/>
            <person name="Watanabe T."/>
            <person name="Sugiyama A."/>
            <person name="Takemoto M."/>
            <person name="Kawakami B."/>
            <person name="Yamazaki M."/>
            <person name="Watanabe K."/>
            <person name="Kumagai A."/>
            <person name="Itakura S."/>
            <person name="Fukuzumi Y."/>
            <person name="Fujimori Y."/>
            <person name="Komiyama M."/>
            <person name="Tashiro H."/>
            <person name="Tanigami A."/>
            <person name="Fujiwara T."/>
            <person name="Ono T."/>
            <person name="Yamada K."/>
            <person name="Fujii Y."/>
            <person name="Ozaki K."/>
            <person name="Hirao M."/>
            <person name="Ohmori Y."/>
            <person name="Kawabata A."/>
            <person name="Hikiji T."/>
            <person name="Kobatake N."/>
            <person name="Inagaki H."/>
            <person name="Ikema Y."/>
            <person name="Okamoto S."/>
            <person name="Okitani R."/>
            <person name="Kawakami T."/>
            <person name="Noguchi S."/>
            <person name="Itoh T."/>
            <person name="Shigeta K."/>
            <person name="Senba T."/>
            <person name="Matsumura K."/>
            <person name="Nakajima Y."/>
            <person name="Mizuno T."/>
            <person name="Morinaga M."/>
            <person name="Sasaki M."/>
            <person name="Togashi T."/>
            <person name="Oyama M."/>
            <person name="Hata H."/>
            <person name="Watanabe M."/>
            <person name="Komatsu T."/>
            <person name="Mizushima-Sugano J."/>
            <person name="Satoh T."/>
            <person name="Shirai Y."/>
            <person name="Takahashi Y."/>
            <person name="Nakagawa K."/>
            <person name="Okumura K."/>
            <person name="Nagase T."/>
            <person name="Nomura N."/>
            <person name="Kikuchi H."/>
            <person name="Masuho Y."/>
            <person name="Yamashita R."/>
            <person name="Nakai K."/>
            <person name="Yada T."/>
            <person name="Nakamura Y."/>
            <person name="Ohara O."/>
            <person name="Isogai T."/>
            <person name="Sugano S."/>
        </authorList>
    </citation>
    <scope>NUCLEOTIDE SEQUENCE [LARGE SCALE MRNA] (ISOFORMS 1 AND 2)</scope>
    <scope>VARIANT LEU-208</scope>
    <source>
        <tissue>Kidney epithelium</tissue>
        <tissue>Spleen</tissue>
        <tissue>Synovium</tissue>
    </source>
</reference>
<reference key="3">
    <citation type="journal article" date="2006" name="Nature">
        <title>DNA sequence of human chromosome 17 and analysis of rearrangement in the human lineage.</title>
        <authorList>
            <person name="Zody M.C."/>
            <person name="Garber M."/>
            <person name="Adams D.J."/>
            <person name="Sharpe T."/>
            <person name="Harrow J."/>
            <person name="Lupski J.R."/>
            <person name="Nicholson C."/>
            <person name="Searle S.M."/>
            <person name="Wilming L."/>
            <person name="Young S.K."/>
            <person name="Abouelleil A."/>
            <person name="Allen N.R."/>
            <person name="Bi W."/>
            <person name="Bloom T."/>
            <person name="Borowsky M.L."/>
            <person name="Bugalter B.E."/>
            <person name="Butler J."/>
            <person name="Chang J.L."/>
            <person name="Chen C.-K."/>
            <person name="Cook A."/>
            <person name="Corum B."/>
            <person name="Cuomo C.A."/>
            <person name="de Jong P.J."/>
            <person name="DeCaprio D."/>
            <person name="Dewar K."/>
            <person name="FitzGerald M."/>
            <person name="Gilbert J."/>
            <person name="Gibson R."/>
            <person name="Gnerre S."/>
            <person name="Goldstein S."/>
            <person name="Grafham D.V."/>
            <person name="Grocock R."/>
            <person name="Hafez N."/>
            <person name="Hagopian D.S."/>
            <person name="Hart E."/>
            <person name="Norman C.H."/>
            <person name="Humphray S."/>
            <person name="Jaffe D.B."/>
            <person name="Jones M."/>
            <person name="Kamal M."/>
            <person name="Khodiyar V.K."/>
            <person name="LaButti K."/>
            <person name="Laird G."/>
            <person name="Lehoczky J."/>
            <person name="Liu X."/>
            <person name="Lokyitsang T."/>
            <person name="Loveland J."/>
            <person name="Lui A."/>
            <person name="Macdonald P."/>
            <person name="Major J.E."/>
            <person name="Matthews L."/>
            <person name="Mauceli E."/>
            <person name="McCarroll S.A."/>
            <person name="Mihalev A.H."/>
            <person name="Mudge J."/>
            <person name="Nguyen C."/>
            <person name="Nicol R."/>
            <person name="O'Leary S.B."/>
            <person name="Osoegawa K."/>
            <person name="Schwartz D.C."/>
            <person name="Shaw-Smith C."/>
            <person name="Stankiewicz P."/>
            <person name="Steward C."/>
            <person name="Swarbreck D."/>
            <person name="Venkataraman V."/>
            <person name="Whittaker C.A."/>
            <person name="Yang X."/>
            <person name="Zimmer A.R."/>
            <person name="Bradley A."/>
            <person name="Hubbard T."/>
            <person name="Birren B.W."/>
            <person name="Rogers J."/>
            <person name="Lander E.S."/>
            <person name="Nusbaum C."/>
        </authorList>
    </citation>
    <scope>NUCLEOTIDE SEQUENCE [LARGE SCALE GENOMIC DNA]</scope>
</reference>
<reference key="4">
    <citation type="journal article" date="2004" name="Genome Res.">
        <title>The status, quality, and expansion of the NIH full-length cDNA project: the Mammalian Gene Collection (MGC).</title>
        <authorList>
            <consortium name="The MGC Project Team"/>
        </authorList>
    </citation>
    <scope>NUCLEOTIDE SEQUENCE [LARGE SCALE MRNA] (ISOFORM 1)</scope>
    <scope>VARIANT LEU-208</scope>
    <source>
        <tissue>Eye</tissue>
        <tissue>Uterus</tissue>
    </source>
</reference>
<reference key="5">
    <citation type="journal article" date="2008" name="Proc. Natl. Acad. Sci. U.S.A.">
        <title>A quantitative atlas of mitotic phosphorylation.</title>
        <authorList>
            <person name="Dephoure N."/>
            <person name="Zhou C."/>
            <person name="Villen J."/>
            <person name="Beausoleil S.A."/>
            <person name="Bakalarski C.E."/>
            <person name="Elledge S.J."/>
            <person name="Gygi S.P."/>
        </authorList>
    </citation>
    <scope>PHOSPHORYLATION [LARGE SCALE ANALYSIS] AT SER-90; SER-325 AND SER-328</scope>
    <scope>IDENTIFICATION BY MASS SPECTROMETRY [LARGE SCALE ANALYSIS]</scope>
    <source>
        <tissue>Cervix carcinoma</tissue>
    </source>
</reference>
<reference key="6">
    <citation type="journal article" date="2011" name="Sci. Signal.">
        <title>System-wide temporal characterization of the proteome and phosphoproteome of human embryonic stem cell differentiation.</title>
        <authorList>
            <person name="Rigbolt K.T."/>
            <person name="Prokhorova T.A."/>
            <person name="Akimov V."/>
            <person name="Henningsen J."/>
            <person name="Johansen P.T."/>
            <person name="Kratchmarova I."/>
            <person name="Kassem M."/>
            <person name="Mann M."/>
            <person name="Olsen J.V."/>
            <person name="Blagoev B."/>
        </authorList>
    </citation>
    <scope>IDENTIFICATION BY MASS SPECTROMETRY [LARGE SCALE ANALYSIS]</scope>
</reference>
<reference key="7">
    <citation type="journal article" date="2012" name="Am. J. Hum. Genet.">
        <title>RHBDF2 mutations are associated with tylosis, a familial esophageal cancer syndrome.</title>
        <authorList>
            <person name="Blaydon D.C."/>
            <person name="Etheridge S.L."/>
            <person name="Risk J.M."/>
            <person name="Hennies H.C."/>
            <person name="Gay L.J."/>
            <person name="Carroll R."/>
            <person name="Plagnol V."/>
            <person name="McRonald F.E."/>
            <person name="Stevens H.P."/>
            <person name="Spurr N.K."/>
            <person name="Bishop D.T."/>
            <person name="Ellis A."/>
            <person name="Jankowski J."/>
            <person name="Field J.K."/>
            <person name="Leigh I.M."/>
            <person name="South A.P."/>
            <person name="Kelsell D.P."/>
        </authorList>
    </citation>
    <scope>TISSUE SPECIFICITY</scope>
    <scope>SUBCELLULAR LOCATION</scope>
    <scope>VARIANTS TOC THR-186 AND LEU-189</scope>
    <scope>INVOLVEMENT IN TOC</scope>
</reference>
<reference key="8">
    <citation type="journal article" date="2013" name="J. Proteome Res.">
        <title>Toward a comprehensive characterization of a human cancer cell phosphoproteome.</title>
        <authorList>
            <person name="Zhou H."/>
            <person name="Di Palma S."/>
            <person name="Preisinger C."/>
            <person name="Peng M."/>
            <person name="Polat A.N."/>
            <person name="Heck A.J."/>
            <person name="Mohammed S."/>
        </authorList>
    </citation>
    <scope>PHOSPHORYLATION [LARGE SCALE ANALYSIS] AT SER-90; SER-113; SER-325 AND SER-328</scope>
    <scope>IDENTIFICATION BY MASS SPECTROMETRY [LARGE SCALE ANALYSIS]</scope>
    <source>
        <tissue>Cervix carcinoma</tissue>
        <tissue>Erythroleukemia</tissue>
    </source>
</reference>
<reference key="9">
    <citation type="journal article" date="2014" name="J. Proteomics">
        <title>An enzyme assisted RP-RPLC approach for in-depth analysis of human liver phosphoproteome.</title>
        <authorList>
            <person name="Bian Y."/>
            <person name="Song C."/>
            <person name="Cheng K."/>
            <person name="Dong M."/>
            <person name="Wang F."/>
            <person name="Huang J."/>
            <person name="Sun D."/>
            <person name="Wang L."/>
            <person name="Ye M."/>
            <person name="Zou H."/>
        </authorList>
    </citation>
    <scope>IDENTIFICATION BY MASS SPECTROMETRY [LARGE SCALE ANALYSIS]</scope>
    <source>
        <tissue>Liver</tissue>
    </source>
</reference>
<reference key="10">
    <citation type="journal article" date="2018" name="Elife">
        <title>iTAP, a novel iRhom interactor, controls TNF secretion by policing the stability of iRhom/TACE.</title>
        <authorList>
            <person name="Oikonomidi I."/>
            <person name="Burbridge E."/>
            <person name="Cavadas M."/>
            <person name="Sullivan G."/>
            <person name="Collis B."/>
            <person name="Naegele H."/>
            <person name="Clancy D."/>
            <person name="Brezinova J."/>
            <person name="Hu T."/>
            <person name="Bileck A."/>
            <person name="Gerner C."/>
            <person name="Bolado A."/>
            <person name="von Kriegsheim A."/>
            <person name="Martin S.J."/>
            <person name="Steinberg F."/>
            <person name="Strisovsky K."/>
            <person name="Adrain C."/>
        </authorList>
    </citation>
    <scope>INTERACTION WITH ADAM17 AND FRMD8</scope>
    <scope>SUBCELLULAR LOCATION</scope>
</reference>
<reference key="11">
    <citation type="journal article" date="2018" name="Elife">
        <title>FRMD8 promotes inflammatory and growth factor signalling by stabilising the iRhom/ADAM17 sheddase complex.</title>
        <authorList>
            <person name="Kuenzel U."/>
            <person name="Grieve A.G."/>
            <person name="Meng Y."/>
            <person name="Sieber B."/>
            <person name="Cowley S.A."/>
            <person name="Freeman M."/>
        </authorList>
    </citation>
    <scope>INTERACTION WITH ADAM17 AND FRMD8</scope>
</reference>
<reference key="12">
    <citation type="journal article" date="2012" name="Fam. Cancer">
        <title>Analysis of a Finnish family confirms RHBDF2 mutations as the underlying factor in tylosis with esophageal cancer.</title>
        <authorList>
            <person name="Saarinen S."/>
            <person name="Vahteristo P."/>
            <person name="Lehtonen R."/>
            <person name="Aittomaeki K."/>
            <person name="Launonen V."/>
            <person name="Kiviluoto T."/>
            <person name="Aaltonen L.A."/>
        </authorList>
    </citation>
    <scope>VARIANT TOC ASN-188</scope>
    <scope>INVOLVEMENT IN TOC</scope>
</reference>
<reference key="13">
    <citation type="journal article" date="2018" name="Clin. Genet.">
        <title>Tylosis associated with squamous cell carcinoma of the oesophagus (TOC): Report of an African family with a novel RHBDF2 variant.</title>
        <authorList>
            <person name="Mokoena T."/>
            <person name="Smit J.G.M."/>
            <person name="Karusseit V.O."/>
            <person name="Dorfling C.M."/>
            <person name="van Rensburg E.J."/>
        </authorList>
    </citation>
    <scope>VARIANT TOC TYR-188</scope>
    <scope>INVOLVEMENT IN TOC</scope>
</reference>
<protein>
    <recommendedName>
        <fullName>Inactive rhomboid protein 2</fullName>
        <shortName>iRhom2</shortName>
    </recommendedName>
    <alternativeName>
        <fullName>Rhomboid 5 homolog 2</fullName>
    </alternativeName>
    <alternativeName>
        <fullName>Rhomboid family member 2</fullName>
    </alternativeName>
    <alternativeName>
        <fullName>Rhomboid veinlet-like protein 5</fullName>
    </alternativeName>
    <alternativeName>
        <fullName>Rhomboid veinlet-like protein 6</fullName>
    </alternativeName>
</protein>
<accession>Q6PJF5</accession>
<accession>A6NEM3</accession>
<accession>A8K801</accession>
<accession>Q5U607</accession>
<accession>Q5YGQ8</accession>
<accession>Q9H6E9</accession>
<proteinExistence type="evidence at protein level"/>
<keyword id="KW-0002">3D-structure</keyword>
<keyword id="KW-0025">Alternative splicing</keyword>
<keyword id="KW-1003">Cell membrane</keyword>
<keyword id="KW-0225">Disease variant</keyword>
<keyword id="KW-0256">Endoplasmic reticulum</keyword>
<keyword id="KW-0340">Growth factor binding</keyword>
<keyword id="KW-0472">Membrane</keyword>
<keyword id="KW-1007">Palmoplantar keratoderma</keyword>
<keyword id="KW-0597">Phosphoprotein</keyword>
<keyword id="KW-0653">Protein transport</keyword>
<keyword id="KW-1267">Proteomics identification</keyword>
<keyword id="KW-1185">Reference proteome</keyword>
<keyword id="KW-0812">Transmembrane</keyword>
<keyword id="KW-1133">Transmembrane helix</keyword>
<keyword id="KW-0813">Transport</keyword>
<feature type="chain" id="PRO_0000341938" description="Inactive rhomboid protein 2">
    <location>
        <begin position="1"/>
        <end position="856"/>
    </location>
</feature>
<feature type="topological domain" description="Cytoplasmic" evidence="2">
    <location>
        <begin position="1"/>
        <end position="409"/>
    </location>
</feature>
<feature type="transmembrane region" description="Helical" evidence="2">
    <location>
        <begin position="410"/>
        <end position="430"/>
    </location>
</feature>
<feature type="topological domain" description="Lumenal" evidence="2">
    <location>
        <begin position="431"/>
        <end position="660"/>
    </location>
</feature>
<feature type="transmembrane region" description="Helical" evidence="2">
    <location>
        <begin position="661"/>
        <end position="681"/>
    </location>
</feature>
<feature type="topological domain" description="Cytoplasmic" evidence="2">
    <location>
        <begin position="682"/>
        <end position="692"/>
    </location>
</feature>
<feature type="transmembrane region" description="Helical" evidence="2">
    <location>
        <begin position="693"/>
        <end position="713"/>
    </location>
</feature>
<feature type="topological domain" description="Lumenal" evidence="2">
    <location>
        <begin position="714"/>
        <end position="715"/>
    </location>
</feature>
<feature type="transmembrane region" description="Helical" evidence="2">
    <location>
        <begin position="716"/>
        <end position="736"/>
    </location>
</feature>
<feature type="topological domain" description="Cytoplasmic" evidence="2">
    <location>
        <begin position="737"/>
        <end position="747"/>
    </location>
</feature>
<feature type="transmembrane region" description="Helical" evidence="2">
    <location>
        <begin position="748"/>
        <end position="768"/>
    </location>
</feature>
<feature type="topological domain" description="Lumenal" evidence="2">
    <location>
        <begin position="769"/>
        <end position="773"/>
    </location>
</feature>
<feature type="transmembrane region" description="Helical" evidence="2">
    <location>
        <begin position="774"/>
        <end position="794"/>
    </location>
</feature>
<feature type="topological domain" description="Cytoplasmic" evidence="2">
    <location>
        <begin position="795"/>
        <end position="802"/>
    </location>
</feature>
<feature type="transmembrane region" description="Helical" evidence="2">
    <location>
        <begin position="803"/>
        <end position="823"/>
    </location>
</feature>
<feature type="topological domain" description="Lumenal" evidence="2">
    <location>
        <begin position="824"/>
        <end position="856"/>
    </location>
</feature>
<feature type="region of interest" description="Disordered" evidence="3">
    <location>
        <begin position="1"/>
        <end position="115"/>
    </location>
</feature>
<feature type="region of interest" description="Disordered" evidence="3">
    <location>
        <begin position="165"/>
        <end position="184"/>
    </location>
</feature>
<feature type="region of interest" description="Involved in interaction with FRMD8" evidence="9">
    <location>
        <begin position="191"/>
        <end position="271"/>
    </location>
</feature>
<feature type="region of interest" description="Disordered" evidence="3">
    <location>
        <begin position="531"/>
        <end position="553"/>
    </location>
</feature>
<feature type="compositionally biased region" description="Basic and acidic residues" evidence="3">
    <location>
        <begin position="94"/>
        <end position="106"/>
    </location>
</feature>
<feature type="modified residue" description="Phosphoserine" evidence="15 16">
    <location>
        <position position="90"/>
    </location>
</feature>
<feature type="modified residue" description="Phosphoserine" evidence="16">
    <location>
        <position position="113"/>
    </location>
</feature>
<feature type="modified residue" description="Phosphoserine" evidence="1">
    <location>
        <position position="117"/>
    </location>
</feature>
<feature type="modified residue" description="Phosphoserine" evidence="1">
    <location>
        <position position="323"/>
    </location>
</feature>
<feature type="modified residue" description="Phosphoserine" evidence="15 16">
    <location>
        <position position="325"/>
    </location>
</feature>
<feature type="modified residue" description="Phosphoserine" evidence="15 16">
    <location>
        <position position="328"/>
    </location>
</feature>
<feature type="splice variant" id="VSP_034368" description="In isoform 2." evidence="12 13">
    <location>
        <begin position="51"/>
        <end position="79"/>
    </location>
</feature>
<feature type="sequence variant" id="VAR_067827" description="In TOC; likely pathogenic; dbSNP:rs387907129." evidence="6">
    <original>I</original>
    <variation>T</variation>
    <location>
        <position position="186"/>
    </location>
</feature>
<feature type="sequence variant" id="VAR_089310" description="In TOC; likely pathogenic." evidence="7">
    <original>D</original>
    <variation>N</variation>
    <location>
        <position position="188"/>
    </location>
</feature>
<feature type="sequence variant" id="VAR_089311" description="In TOC; likely pathogenic." evidence="8">
    <original>D</original>
    <variation>Y</variation>
    <location>
        <position position="188"/>
    </location>
</feature>
<feature type="sequence variant" id="VAR_067828" description="In TOC; likely pathogenic; dbSNP:rs387907130." evidence="6">
    <original>P</original>
    <variation>L</variation>
    <location>
        <position position="189"/>
    </location>
</feature>
<feature type="sequence variant" id="VAR_044125" description="In dbSNP:rs3744045." evidence="4 5 11">
    <original>P</original>
    <variation>L</variation>
    <location>
        <position position="208"/>
    </location>
</feature>
<feature type="sequence variant" id="VAR_044126" description="In dbSNP:rs34814954.">
    <original>A</original>
    <variation>T</variation>
    <location>
        <position position="249"/>
    </location>
</feature>
<feature type="sequence variant" id="VAR_044127" description="In dbSNP:rs11553545.">
    <original>D</original>
    <variation>Y</variation>
    <location>
        <position position="528"/>
    </location>
</feature>
<feature type="sequence conflict" description="In Ref. 2; BAF84824 and 4; AAH16034." evidence="14" ref="2 4">
    <original>A</original>
    <variation>S</variation>
    <location>
        <position position="67"/>
    </location>
</feature>
<feature type="sequence conflict" description="In Ref. 2; BAF84855." evidence="14" ref="2">
    <original>N</original>
    <variation>D</variation>
    <location>
        <position position="705"/>
    </location>
</feature>
<feature type="sequence conflict" description="In Ref. 2; BAF84855." evidence="14" ref="2">
    <original>D</original>
    <variation>G</variation>
    <location>
        <position position="852"/>
    </location>
</feature>
<feature type="helix" evidence="18">
    <location>
        <begin position="373"/>
        <end position="377"/>
    </location>
</feature>
<feature type="helix" evidence="18">
    <location>
        <begin position="388"/>
        <end position="395"/>
    </location>
</feature>
<feature type="helix" evidence="18">
    <location>
        <begin position="403"/>
        <end position="422"/>
    </location>
</feature>
<feature type="strand" evidence="18">
    <location>
        <begin position="429"/>
        <end position="440"/>
    </location>
</feature>
<feature type="strand" evidence="18">
    <location>
        <begin position="442"/>
        <end position="454"/>
    </location>
</feature>
<feature type="strand" evidence="18">
    <location>
        <begin position="457"/>
        <end position="460"/>
    </location>
</feature>
<feature type="helix" evidence="18">
    <location>
        <begin position="463"/>
        <end position="469"/>
    </location>
</feature>
<feature type="helix" evidence="18">
    <location>
        <begin position="474"/>
        <end position="477"/>
    </location>
</feature>
<feature type="helix" evidence="18">
    <location>
        <begin position="481"/>
        <end position="495"/>
    </location>
</feature>
<feature type="strand" evidence="18">
    <location>
        <begin position="498"/>
        <end position="504"/>
    </location>
</feature>
<feature type="strand" evidence="18">
    <location>
        <begin position="508"/>
        <end position="511"/>
    </location>
</feature>
<feature type="helix" evidence="19">
    <location>
        <begin position="513"/>
        <end position="515"/>
    </location>
</feature>
<feature type="turn" evidence="18">
    <location>
        <begin position="518"/>
        <end position="520"/>
    </location>
</feature>
<feature type="strand" evidence="18">
    <location>
        <begin position="521"/>
        <end position="524"/>
    </location>
</feature>
<feature type="turn" evidence="18">
    <location>
        <begin position="528"/>
        <end position="530"/>
    </location>
</feature>
<feature type="strand" evidence="17">
    <location>
        <begin position="540"/>
        <end position="542"/>
    </location>
</feature>
<feature type="turn" evidence="18">
    <location>
        <begin position="553"/>
        <end position="555"/>
    </location>
</feature>
<feature type="strand" evidence="19">
    <location>
        <begin position="556"/>
        <end position="558"/>
    </location>
</feature>
<feature type="helix" evidence="17">
    <location>
        <begin position="563"/>
        <end position="565"/>
    </location>
</feature>
<feature type="helix" evidence="17">
    <location>
        <begin position="571"/>
        <end position="573"/>
    </location>
</feature>
<feature type="strand" evidence="19">
    <location>
        <begin position="578"/>
        <end position="580"/>
    </location>
</feature>
<feature type="turn" evidence="18">
    <location>
        <begin position="589"/>
        <end position="591"/>
    </location>
</feature>
<feature type="strand" evidence="18">
    <location>
        <begin position="598"/>
        <end position="601"/>
    </location>
</feature>
<feature type="strand" evidence="18">
    <location>
        <begin position="603"/>
        <end position="606"/>
    </location>
</feature>
<feature type="strand" evidence="18">
    <location>
        <begin position="608"/>
        <end position="611"/>
    </location>
</feature>
<feature type="helix" evidence="18">
    <location>
        <begin position="613"/>
        <end position="618"/>
    </location>
</feature>
<feature type="helix" evidence="18">
    <location>
        <begin position="630"/>
        <end position="632"/>
    </location>
</feature>
<feature type="helix" evidence="18">
    <location>
        <begin position="635"/>
        <end position="640"/>
    </location>
</feature>
<feature type="helix" evidence="18">
    <location>
        <begin position="656"/>
        <end position="659"/>
    </location>
</feature>
<feature type="helix" evidence="18">
    <location>
        <begin position="660"/>
        <end position="662"/>
    </location>
</feature>
<feature type="helix" evidence="18">
    <location>
        <begin position="667"/>
        <end position="688"/>
    </location>
</feature>
<feature type="helix" evidence="18">
    <location>
        <begin position="690"/>
        <end position="711"/>
    </location>
</feature>
<feature type="helix" evidence="18">
    <location>
        <begin position="721"/>
        <end position="737"/>
    </location>
</feature>
<feature type="helix" evidence="18">
    <location>
        <begin position="739"/>
        <end position="741"/>
    </location>
</feature>
<feature type="strand" evidence="18">
    <location>
        <begin position="742"/>
        <end position="744"/>
    </location>
</feature>
<feature type="helix" evidence="18">
    <location>
        <begin position="745"/>
        <end position="763"/>
    </location>
</feature>
<feature type="helix" evidence="18">
    <location>
        <begin position="770"/>
        <end position="787"/>
    </location>
</feature>
<feature type="helix" evidence="18">
    <location>
        <begin position="795"/>
        <end position="824"/>
    </location>
</feature>
<feature type="helix" evidence="18">
    <location>
        <begin position="832"/>
        <end position="837"/>
    </location>
</feature>
<feature type="turn" evidence="18">
    <location>
        <begin position="843"/>
        <end position="850"/>
    </location>
</feature>
<feature type="strand" evidence="18">
    <location>
        <begin position="852"/>
        <end position="854"/>
    </location>
</feature>
<name>RHDF2_HUMAN</name>
<sequence length="856" mass="96686">MASADKNGGSVSSVSSSRLQSRKPPNLSITIPPPEKETQAPGEQDSMLPEGFQNRRLKKSQPRTWAAHTTACPPSFLPKRKNPAYLKSVSLQEPRSRWQESSEKRPGFRRQASLSQSIRKGAAQWFGVSGDWEGQRQQWQRRSLHHCSMRYGRLKASCQRDLELPSQEAPSFQGTESPKPCKMPKIVDPLARGRAFRHPEEMDRPHAPHPPLTPGVLSLTSFTSVRSGYSHLPRRKRMSVAHMSLQAAAALLKGRSVLDATGQRCRVVKRSFAFPSFLEEDVVDGADTFDSSFFSKEEMSSMPDDVFESPPLSASYFRGIPHSASPVSPDGVQIPLKEYGRAPVPGPRRGKRIASKVKHFAFDRKKRHYGLGVVGNWLNRSYRRSISSTVQRQLESFDSHRPYFTYWLTFVHVIITLLVICTYGIAPVGFAQHVTTQLVLRNKGVYESVKYIQQENFWVGPSSIDLIHLGAKFSPCIRKDGQIEQLVLRERDLERDSGCCVQNDHSGCIQTQRKDCSETLATFVKWQDDTGPPMDKSDLGQKRTSGAVCHQDPRTCEEPASSGAHIWPDDITKWPICTEQARSNHTGFLHMDCEIKGRPCCIGTKGSCEITTREYCEFMHGYFHEEATLCSQVHCLDKVCGLLPFLNPEVPDQFYRLWLSLFLHAGVVHCLVSVVFQMTILRDLEKLAGWHRIAIIFILSGITGNLASAIFLPYRAEVGPAGSQFGLLACLFVELFQSWPLLERPWKAFLNLSAIVLFLFICGLLPWIDNIAHIFGFLSGLLLAFAFLPYITFGTSDKYRKRALILVSLLAFAGLFAALVLWLYIYPINWPWIEHLTCFPFTSRFCEKYELDQVLH</sequence>
<dbReference type="EMBL" id="AY500247">
    <property type="protein sequence ID" value="AAS77567.1"/>
    <property type="molecule type" value="mRNA"/>
</dbReference>
<dbReference type="EMBL" id="AK025994">
    <property type="protein sequence ID" value="BAB15310.1"/>
    <property type="status" value="ALT_INIT"/>
    <property type="molecule type" value="mRNA"/>
</dbReference>
<dbReference type="EMBL" id="AK292135">
    <property type="protein sequence ID" value="BAF84824.1"/>
    <property type="molecule type" value="mRNA"/>
</dbReference>
<dbReference type="EMBL" id="AK292166">
    <property type="protein sequence ID" value="BAF84855.1"/>
    <property type="molecule type" value="mRNA"/>
</dbReference>
<dbReference type="EMBL" id="AC015802">
    <property type="status" value="NOT_ANNOTATED_CDS"/>
    <property type="molecule type" value="Genomic_DNA"/>
</dbReference>
<dbReference type="EMBL" id="BC035829">
    <property type="protein sequence ID" value="AAH35829.1"/>
    <property type="status" value="ALT_INIT"/>
    <property type="molecule type" value="mRNA"/>
</dbReference>
<dbReference type="EMBL" id="BC016034">
    <property type="protein sequence ID" value="AAH16034.2"/>
    <property type="molecule type" value="mRNA"/>
</dbReference>
<dbReference type="CCDS" id="CCDS32743.1">
    <molecule id="Q6PJF5-1"/>
</dbReference>
<dbReference type="CCDS" id="CCDS32744.1">
    <molecule id="Q6PJF5-2"/>
</dbReference>
<dbReference type="RefSeq" id="NP_001005498.2">
    <molecule id="Q6PJF5-2"/>
    <property type="nucleotide sequence ID" value="NM_001005498.4"/>
</dbReference>
<dbReference type="RefSeq" id="NP_001363157.1">
    <molecule id="Q6PJF5-2"/>
    <property type="nucleotide sequence ID" value="NM_001376228.1"/>
</dbReference>
<dbReference type="RefSeq" id="NP_001363158.1">
    <molecule id="Q6PJF5-2"/>
    <property type="nucleotide sequence ID" value="NM_001376229.1"/>
</dbReference>
<dbReference type="RefSeq" id="NP_001363159.1">
    <molecule id="Q6PJF5-2"/>
    <property type="nucleotide sequence ID" value="NM_001376230.1"/>
</dbReference>
<dbReference type="RefSeq" id="NP_078875.4">
    <molecule id="Q6PJF5-1"/>
    <property type="nucleotide sequence ID" value="NM_024599.5"/>
</dbReference>
<dbReference type="RefSeq" id="XP_005257726.1">
    <molecule id="Q6PJF5-1"/>
    <property type="nucleotide sequence ID" value="XM_005257669.4"/>
</dbReference>
<dbReference type="RefSeq" id="XP_005257727.1">
    <property type="nucleotide sequence ID" value="XM_005257670.1"/>
</dbReference>
<dbReference type="RefSeq" id="XP_011523551.1">
    <molecule id="Q6PJF5-2"/>
    <property type="nucleotide sequence ID" value="XM_011525249.3"/>
</dbReference>
<dbReference type="RefSeq" id="XP_011523552.1">
    <molecule id="Q6PJF5-2"/>
    <property type="nucleotide sequence ID" value="XM_011525250.3"/>
</dbReference>
<dbReference type="RefSeq" id="XP_011523553.1">
    <molecule id="Q6PJF5-2"/>
    <property type="nucleotide sequence ID" value="XM_011525251.3"/>
</dbReference>
<dbReference type="RefSeq" id="XP_016880568.1">
    <property type="nucleotide sequence ID" value="XM_017025079.1"/>
</dbReference>
<dbReference type="RefSeq" id="XP_047292699.1">
    <molecule id="Q6PJF5-1"/>
    <property type="nucleotide sequence ID" value="XM_047436743.1"/>
</dbReference>
<dbReference type="RefSeq" id="XP_047292700.1">
    <molecule id="Q6PJF5-1"/>
    <property type="nucleotide sequence ID" value="XM_047436744.1"/>
</dbReference>
<dbReference type="RefSeq" id="XP_047292701.1">
    <molecule id="Q6PJF5-1"/>
    <property type="nucleotide sequence ID" value="XM_047436745.1"/>
</dbReference>
<dbReference type="RefSeq" id="XP_047292702.1">
    <molecule id="Q6PJF5-1"/>
    <property type="nucleotide sequence ID" value="XM_047436746.1"/>
</dbReference>
<dbReference type="RefSeq" id="XP_047292703.1">
    <molecule id="Q6PJF5-1"/>
    <property type="nucleotide sequence ID" value="XM_047436747.1"/>
</dbReference>
<dbReference type="RefSeq" id="XP_047292704.1">
    <molecule id="Q6PJF5-1"/>
    <property type="nucleotide sequence ID" value="XM_047436748.1"/>
</dbReference>
<dbReference type="RefSeq" id="XP_047292705.1">
    <molecule id="Q6PJF5-1"/>
    <property type="nucleotide sequence ID" value="XM_047436749.1"/>
</dbReference>
<dbReference type="RefSeq" id="XP_047292706.1">
    <molecule id="Q6PJF5-1"/>
    <property type="nucleotide sequence ID" value="XM_047436750.1"/>
</dbReference>
<dbReference type="RefSeq" id="XP_047292707.1">
    <molecule id="Q6PJF5-2"/>
    <property type="nucleotide sequence ID" value="XM_047436751.1"/>
</dbReference>
<dbReference type="RefSeq" id="XP_047292708.1">
    <molecule id="Q6PJF5-2"/>
    <property type="nucleotide sequence ID" value="XM_047436752.1"/>
</dbReference>
<dbReference type="RefSeq" id="XP_047292709.1">
    <molecule id="Q6PJF5-2"/>
    <property type="nucleotide sequence ID" value="XM_047436753.1"/>
</dbReference>
<dbReference type="RefSeq" id="XP_047292711.1">
    <molecule id="Q6PJF5-2"/>
    <property type="nucleotide sequence ID" value="XM_047436755.1"/>
</dbReference>
<dbReference type="RefSeq" id="XP_047292712.1">
    <molecule id="Q6PJF5-2"/>
    <property type="nucleotide sequence ID" value="XM_047436756.1"/>
</dbReference>
<dbReference type="PDB" id="8SNL">
    <property type="method" value="EM"/>
    <property type="resolution" value="2.78 A"/>
    <property type="chains" value="B=1-856"/>
</dbReference>
<dbReference type="PDB" id="8SNM">
    <property type="method" value="EM"/>
    <property type="resolution" value="3.84 A"/>
    <property type="chains" value="C=1-856"/>
</dbReference>
<dbReference type="PDB" id="8SNN">
    <property type="method" value="EM"/>
    <property type="resolution" value="2.32 A"/>
    <property type="chains" value="B=1-856"/>
</dbReference>
<dbReference type="PDB" id="8SNO">
    <property type="method" value="EM"/>
    <property type="resolution" value="2.78 A"/>
    <property type="chains" value="B=1-856"/>
</dbReference>
<dbReference type="PDBsum" id="8SNL"/>
<dbReference type="PDBsum" id="8SNM"/>
<dbReference type="PDBsum" id="8SNN"/>
<dbReference type="PDBsum" id="8SNO"/>
<dbReference type="EMDB" id="EMD-40628"/>
<dbReference type="EMDB" id="EMD-40629"/>
<dbReference type="EMDB" id="EMD-40630"/>
<dbReference type="EMDB" id="EMD-40631"/>
<dbReference type="SMR" id="Q6PJF5"/>
<dbReference type="BioGRID" id="122779">
    <property type="interactions" value="204"/>
</dbReference>
<dbReference type="ELM" id="Q6PJF5"/>
<dbReference type="FunCoup" id="Q6PJF5">
    <property type="interactions" value="804"/>
</dbReference>
<dbReference type="IntAct" id="Q6PJF5">
    <property type="interactions" value="54"/>
</dbReference>
<dbReference type="MINT" id="Q6PJF5"/>
<dbReference type="STRING" id="9606.ENSP00000322775"/>
<dbReference type="MEROPS" id="S54.953"/>
<dbReference type="GlyGen" id="Q6PJF5">
    <property type="glycosylation" value="1 site, 1 N-linked glycan (1 site)"/>
</dbReference>
<dbReference type="iPTMnet" id="Q6PJF5"/>
<dbReference type="PhosphoSitePlus" id="Q6PJF5"/>
<dbReference type="SwissPalm" id="Q6PJF5"/>
<dbReference type="BioMuta" id="RHBDF2"/>
<dbReference type="DMDM" id="193806488"/>
<dbReference type="jPOST" id="Q6PJF5"/>
<dbReference type="MassIVE" id="Q6PJF5"/>
<dbReference type="PaxDb" id="9606-ENSP00000322775"/>
<dbReference type="PeptideAtlas" id="Q6PJF5"/>
<dbReference type="ProteomicsDB" id="67199">
    <molecule id="Q6PJF5-1"/>
</dbReference>
<dbReference type="ProteomicsDB" id="67200">
    <molecule id="Q6PJF5-2"/>
</dbReference>
<dbReference type="Pumba" id="Q6PJF5"/>
<dbReference type="Antibodypedia" id="19692">
    <property type="antibodies" value="104 antibodies from 22 providers"/>
</dbReference>
<dbReference type="DNASU" id="79651"/>
<dbReference type="Ensembl" id="ENST00000313080.8">
    <molecule id="Q6PJF5-1"/>
    <property type="protein sequence ID" value="ENSP00000322775.3"/>
    <property type="gene ID" value="ENSG00000129667.13"/>
</dbReference>
<dbReference type="Ensembl" id="ENST00000591885.5">
    <molecule id="Q6PJF5-2"/>
    <property type="protein sequence ID" value="ENSP00000466867.1"/>
    <property type="gene ID" value="ENSG00000129667.13"/>
</dbReference>
<dbReference type="Ensembl" id="ENST00000675367.1">
    <molecule id="Q6PJF5-2"/>
    <property type="protein sequence ID" value="ENSP00000501790.1"/>
    <property type="gene ID" value="ENSG00000129667.13"/>
</dbReference>
<dbReference type="GeneID" id="79651"/>
<dbReference type="KEGG" id="hsa:79651"/>
<dbReference type="MANE-Select" id="ENST00000675367.1">
    <molecule id="Q6PJF5-2"/>
    <property type="protein sequence ID" value="ENSP00000501790.1"/>
    <property type="RefSeq nucleotide sequence ID" value="NM_001005498.4"/>
    <property type="RefSeq protein sequence ID" value="NP_001005498.2"/>
</dbReference>
<dbReference type="UCSC" id="uc002jrq.3">
    <molecule id="Q6PJF5-1"/>
    <property type="organism name" value="human"/>
</dbReference>
<dbReference type="AGR" id="HGNC:20788"/>
<dbReference type="CTD" id="79651"/>
<dbReference type="DisGeNET" id="79651"/>
<dbReference type="GeneCards" id="RHBDF2"/>
<dbReference type="HGNC" id="HGNC:20788">
    <property type="gene designation" value="RHBDF2"/>
</dbReference>
<dbReference type="HPA" id="ENSG00000129667">
    <property type="expression patterns" value="Low tissue specificity"/>
</dbReference>
<dbReference type="MalaCards" id="RHBDF2"/>
<dbReference type="MIM" id="148500">
    <property type="type" value="phenotype"/>
</dbReference>
<dbReference type="MIM" id="614404">
    <property type="type" value="gene"/>
</dbReference>
<dbReference type="neXtProt" id="NX_Q6PJF5"/>
<dbReference type="OpenTargets" id="ENSG00000129667"/>
<dbReference type="Orphanet" id="2198">
    <property type="disease" value="Palmoplantar keratoderma-esophageal carcinoma syndrome"/>
</dbReference>
<dbReference type="PharmGKB" id="PA134980674"/>
<dbReference type="VEuPathDB" id="HostDB:ENSG00000129667"/>
<dbReference type="eggNOG" id="KOG2290">
    <property type="taxonomic scope" value="Eukaryota"/>
</dbReference>
<dbReference type="GeneTree" id="ENSGT00940000159027"/>
<dbReference type="HOGENOM" id="CLU_011531_1_1_1"/>
<dbReference type="InParanoid" id="Q6PJF5"/>
<dbReference type="OMA" id="FTSHFCE"/>
<dbReference type="OrthoDB" id="2146116at2759"/>
<dbReference type="PAN-GO" id="Q6PJF5">
    <property type="GO annotations" value="3 GO annotations based on evolutionary models"/>
</dbReference>
<dbReference type="PhylomeDB" id="Q6PJF5"/>
<dbReference type="TreeFam" id="TF312988"/>
<dbReference type="PathwayCommons" id="Q6PJF5"/>
<dbReference type="Reactome" id="R-HSA-9662834">
    <property type="pathway name" value="CD163 mediating an anti-inflammatory response"/>
</dbReference>
<dbReference type="SignaLink" id="Q6PJF5"/>
<dbReference type="BioGRID-ORCS" id="79651">
    <property type="hits" value="13 hits in 1147 CRISPR screens"/>
</dbReference>
<dbReference type="ChiTaRS" id="RHBDF2">
    <property type="organism name" value="human"/>
</dbReference>
<dbReference type="GeneWiki" id="RHBDF2"/>
<dbReference type="GenomeRNAi" id="79651"/>
<dbReference type="Pharos" id="Q6PJF5">
    <property type="development level" value="Tbio"/>
</dbReference>
<dbReference type="PRO" id="PR:Q6PJF5"/>
<dbReference type="Proteomes" id="UP000005640">
    <property type="component" value="Chromosome 17"/>
</dbReference>
<dbReference type="RNAct" id="Q6PJF5">
    <property type="molecule type" value="protein"/>
</dbReference>
<dbReference type="Bgee" id="ENSG00000129667">
    <property type="expression patterns" value="Expressed in granulocyte and 159 other cell types or tissues"/>
</dbReference>
<dbReference type="ExpressionAtlas" id="Q6PJF5">
    <property type="expression patterns" value="baseline and differential"/>
</dbReference>
<dbReference type="GO" id="GO:0005789">
    <property type="term" value="C:endoplasmic reticulum membrane"/>
    <property type="evidence" value="ECO:0000250"/>
    <property type="project" value="UniProtKB"/>
</dbReference>
<dbReference type="GO" id="GO:0005796">
    <property type="term" value="C:Golgi lumen"/>
    <property type="evidence" value="ECO:0000304"/>
    <property type="project" value="Reactome"/>
</dbReference>
<dbReference type="GO" id="GO:0005886">
    <property type="term" value="C:plasma membrane"/>
    <property type="evidence" value="ECO:0000314"/>
    <property type="project" value="UniProtKB"/>
</dbReference>
<dbReference type="GO" id="GO:0019838">
    <property type="term" value="F:growth factor binding"/>
    <property type="evidence" value="ECO:0007669"/>
    <property type="project" value="UniProtKB-KW"/>
</dbReference>
<dbReference type="GO" id="GO:0140318">
    <property type="term" value="F:protein transporter activity"/>
    <property type="evidence" value="ECO:0000304"/>
    <property type="project" value="Reactome"/>
</dbReference>
<dbReference type="GO" id="GO:0002862">
    <property type="term" value="P:negative regulation of inflammatory response to antigenic stimulus"/>
    <property type="evidence" value="ECO:0000304"/>
    <property type="project" value="Reactome"/>
</dbReference>
<dbReference type="GO" id="GO:0050709">
    <property type="term" value="P:negative regulation of protein secretion"/>
    <property type="evidence" value="ECO:0000250"/>
    <property type="project" value="UniProtKB"/>
</dbReference>
<dbReference type="GO" id="GO:0072659">
    <property type="term" value="P:protein localization to plasma membrane"/>
    <property type="evidence" value="ECO:0007669"/>
    <property type="project" value="Ensembl"/>
</dbReference>
<dbReference type="GO" id="GO:0015031">
    <property type="term" value="P:protein transport"/>
    <property type="evidence" value="ECO:0007669"/>
    <property type="project" value="UniProtKB-KW"/>
</dbReference>
<dbReference type="GO" id="GO:0042058">
    <property type="term" value="P:regulation of epidermal growth factor receptor signaling pathway"/>
    <property type="evidence" value="ECO:0000318"/>
    <property type="project" value="GO_Central"/>
</dbReference>
<dbReference type="GO" id="GO:0050708">
    <property type="term" value="P:regulation of protein secretion"/>
    <property type="evidence" value="ECO:0000318"/>
    <property type="project" value="GO_Central"/>
</dbReference>
<dbReference type="FunFam" id="1.20.1540.10:FF:000001">
    <property type="entry name" value="Putative inactive rhomboid protein 1"/>
    <property type="match status" value="1"/>
</dbReference>
<dbReference type="Gene3D" id="1.20.1540.10">
    <property type="entry name" value="Rhomboid-like"/>
    <property type="match status" value="1"/>
</dbReference>
<dbReference type="InterPro" id="IPR051512">
    <property type="entry name" value="Inactive_Rhomboid"/>
</dbReference>
<dbReference type="InterPro" id="IPR022241">
    <property type="entry name" value="iRhom1_2_N"/>
</dbReference>
<dbReference type="InterPro" id="IPR022764">
    <property type="entry name" value="Peptidase_S54_rhomboid_dom"/>
</dbReference>
<dbReference type="InterPro" id="IPR035952">
    <property type="entry name" value="Rhomboid-like_sf"/>
</dbReference>
<dbReference type="PANTHER" id="PTHR45965">
    <property type="entry name" value="INACTIVE RHOMBOID PROTEIN"/>
    <property type="match status" value="1"/>
</dbReference>
<dbReference type="PANTHER" id="PTHR45965:SF2">
    <property type="entry name" value="INACTIVE RHOMBOID PROTEIN 2"/>
    <property type="match status" value="1"/>
</dbReference>
<dbReference type="Pfam" id="PF12595">
    <property type="entry name" value="iRhom1-2_N"/>
    <property type="match status" value="1"/>
</dbReference>
<dbReference type="Pfam" id="PF01694">
    <property type="entry name" value="Rhomboid"/>
    <property type="match status" value="1"/>
</dbReference>
<dbReference type="SUPFAM" id="SSF144091">
    <property type="entry name" value="Rhomboid-like"/>
    <property type="match status" value="1"/>
</dbReference>
<comment type="function">
    <text evidence="1">Regulates ADAM17 protease, a sheddase of the epidermal growth factor (EGF) receptor ligands and TNF, thereby plays a role in sleep, cell survival, proliferation, migration and inflammation. Does not exhibit any protease activity on its own.</text>
</comment>
<comment type="subunit">
    <text evidence="1 9 10">Interacts with EGF (By similarity). Interacts (via cytoplasmic N-terminus) with FRMD8/iTAP; this interaction leads to mutual protein stabilization (PubMed:29897333, PubMed:29897336). Interacts with ADAM17/TACE (PubMed:29897333, PubMed:29897336).</text>
</comment>
<comment type="subcellular location">
    <subcellularLocation>
        <location evidence="1">Endoplasmic reticulum membrane</location>
        <topology evidence="1">Multi-pass membrane protein</topology>
    </subcellularLocation>
    <subcellularLocation>
        <location evidence="6 9">Cell membrane</location>
    </subcellularLocation>
</comment>
<comment type="alternative products">
    <event type="alternative splicing"/>
    <isoform>
        <id>Q6PJF5-1</id>
        <name>1</name>
        <sequence type="displayed"/>
    </isoform>
    <isoform>
        <id>Q6PJF5-2</id>
        <name>2</name>
        <sequence type="described" ref="VSP_034368"/>
    </isoform>
</comment>
<comment type="tissue specificity">
    <text evidence="6">Found in the epidermis and esophageal epithelium.</text>
</comment>
<comment type="disease" evidence="6 7 8">
    <disease id="DI-03431">
        <name>Tylosis with esophageal cancer</name>
        <acronym>TOC</acronym>
        <description>An autosomal dominant syndrome characterized by focal non-epidermolytic palmoplantar keratoderma, oral leukokeratosis, and a high lifetime risk of developing esophageal squamous cell carcinoma.</description>
        <dbReference type="MIM" id="148500"/>
    </disease>
    <text>The disease is caused by variants affecting the gene represented in this entry.</text>
</comment>
<comment type="similarity">
    <text evidence="14">Belongs to the peptidase S54 family.</text>
</comment>
<comment type="sequence caution" evidence="14">
    <conflict type="erroneous initiation">
        <sequence resource="EMBL-CDS" id="AAH35829"/>
    </conflict>
    <text>Extended N-terminus.</text>
</comment>
<comment type="sequence caution" evidence="14">
    <conflict type="erroneous initiation">
        <sequence resource="EMBL-CDS" id="BAB15310"/>
    </conflict>
    <text>Truncated N-terminus.</text>
</comment>
<evidence type="ECO:0000250" key="1">
    <source>
        <dbReference type="UniProtKB" id="Q80WQ6"/>
    </source>
</evidence>
<evidence type="ECO:0000255" key="2"/>
<evidence type="ECO:0000256" key="3">
    <source>
        <dbReference type="SAM" id="MobiDB-lite"/>
    </source>
</evidence>
<evidence type="ECO:0000269" key="4">
    <source>
    </source>
</evidence>
<evidence type="ECO:0000269" key="5">
    <source>
    </source>
</evidence>
<evidence type="ECO:0000269" key="6">
    <source>
    </source>
</evidence>
<evidence type="ECO:0000269" key="7">
    <source>
    </source>
</evidence>
<evidence type="ECO:0000269" key="8">
    <source>
    </source>
</evidence>
<evidence type="ECO:0000269" key="9">
    <source>
    </source>
</evidence>
<evidence type="ECO:0000269" key="10">
    <source>
    </source>
</evidence>
<evidence type="ECO:0000269" key="11">
    <source ref="1"/>
</evidence>
<evidence type="ECO:0000303" key="12">
    <source>
    </source>
</evidence>
<evidence type="ECO:0000303" key="13">
    <source ref="1"/>
</evidence>
<evidence type="ECO:0000305" key="14"/>
<evidence type="ECO:0007744" key="15">
    <source>
    </source>
</evidence>
<evidence type="ECO:0007744" key="16">
    <source>
    </source>
</evidence>
<evidence type="ECO:0007829" key="17">
    <source>
        <dbReference type="PDB" id="8SNL"/>
    </source>
</evidence>
<evidence type="ECO:0007829" key="18">
    <source>
        <dbReference type="PDB" id="8SNN"/>
    </source>
</evidence>
<evidence type="ECO:0007829" key="19">
    <source>
        <dbReference type="PDB" id="8SNO"/>
    </source>
</evidence>
<organism>
    <name type="scientific">Homo sapiens</name>
    <name type="common">Human</name>
    <dbReference type="NCBI Taxonomy" id="9606"/>
    <lineage>
        <taxon>Eukaryota</taxon>
        <taxon>Metazoa</taxon>
        <taxon>Chordata</taxon>
        <taxon>Craniata</taxon>
        <taxon>Vertebrata</taxon>
        <taxon>Euteleostomi</taxon>
        <taxon>Mammalia</taxon>
        <taxon>Eutheria</taxon>
        <taxon>Euarchontoglires</taxon>
        <taxon>Primates</taxon>
        <taxon>Haplorrhini</taxon>
        <taxon>Catarrhini</taxon>
        <taxon>Hominidae</taxon>
        <taxon>Homo</taxon>
    </lineage>
</organism>